<evidence type="ECO:0000255" key="1">
    <source>
        <dbReference type="HAMAP-Rule" id="MF_01021"/>
    </source>
</evidence>
<comment type="function">
    <text evidence="1">Catalyzes the hydrolysis of the adenine ring of phosphoribosyl-AMP.</text>
</comment>
<comment type="catalytic activity">
    <reaction evidence="1">
        <text>1-(5-phospho-beta-D-ribosyl)-5'-AMP + H2O = 1-(5-phospho-beta-D-ribosyl)-5-[(5-phospho-beta-D-ribosylamino)methylideneamino]imidazole-4-carboxamide</text>
        <dbReference type="Rhea" id="RHEA:20049"/>
        <dbReference type="ChEBI" id="CHEBI:15377"/>
        <dbReference type="ChEBI" id="CHEBI:58435"/>
        <dbReference type="ChEBI" id="CHEBI:59457"/>
        <dbReference type="EC" id="3.5.4.19"/>
    </reaction>
</comment>
<comment type="cofactor">
    <cofactor evidence="1">
        <name>Mg(2+)</name>
        <dbReference type="ChEBI" id="CHEBI:18420"/>
    </cofactor>
    <text evidence="1">Binds 1 Mg(2+) ion per subunit.</text>
</comment>
<comment type="cofactor">
    <cofactor evidence="1">
        <name>Zn(2+)</name>
        <dbReference type="ChEBI" id="CHEBI:29105"/>
    </cofactor>
    <text evidence="1">Binds 1 zinc ion per subunit.</text>
</comment>
<comment type="pathway">
    <text evidence="1">Amino-acid biosynthesis; L-histidine biosynthesis; L-histidine from 5-phospho-alpha-D-ribose 1-diphosphate: step 3/9.</text>
</comment>
<comment type="subunit">
    <text evidence="1">Homodimer.</text>
</comment>
<comment type="subcellular location">
    <subcellularLocation>
        <location evidence="1">Cytoplasm</location>
    </subcellularLocation>
</comment>
<comment type="similarity">
    <text evidence="1">Belongs to the PRA-CH family.</text>
</comment>
<organism>
    <name type="scientific">Streptococcus gordonii (strain Challis / ATCC 35105 / BCRC 15272 / CH1 / DL1 / V288)</name>
    <dbReference type="NCBI Taxonomy" id="467705"/>
    <lineage>
        <taxon>Bacteria</taxon>
        <taxon>Bacillati</taxon>
        <taxon>Bacillota</taxon>
        <taxon>Bacilli</taxon>
        <taxon>Lactobacillales</taxon>
        <taxon>Streptococcaceae</taxon>
        <taxon>Streptococcus</taxon>
    </lineage>
</organism>
<name>HIS3_STRGC</name>
<sequence>MTEVKLDFQKQGGLIPAIILDHTSKEVIMLAYLNEEAYQLTRTSGQMWYWSRSRQELWHKGATSGHYQTVKKITADCDQDTLLIEVDQLGAACHTGSKSCFFHIIWDEEDSKTD</sequence>
<dbReference type="EC" id="3.5.4.19" evidence="1"/>
<dbReference type="EMBL" id="CP000725">
    <property type="protein sequence ID" value="ABV09159.1"/>
    <property type="molecule type" value="Genomic_DNA"/>
</dbReference>
<dbReference type="RefSeq" id="WP_012130488.1">
    <property type="nucleotide sequence ID" value="NC_009785.1"/>
</dbReference>
<dbReference type="SMR" id="A8AY23"/>
<dbReference type="STRING" id="467705.SGO_1403"/>
<dbReference type="KEGG" id="sgo:SGO_1403"/>
<dbReference type="eggNOG" id="COG0139">
    <property type="taxonomic scope" value="Bacteria"/>
</dbReference>
<dbReference type="HOGENOM" id="CLU_048577_5_3_9"/>
<dbReference type="UniPathway" id="UPA00031">
    <property type="reaction ID" value="UER00008"/>
</dbReference>
<dbReference type="Proteomes" id="UP000001131">
    <property type="component" value="Chromosome"/>
</dbReference>
<dbReference type="GO" id="GO:0005737">
    <property type="term" value="C:cytoplasm"/>
    <property type="evidence" value="ECO:0007669"/>
    <property type="project" value="UniProtKB-SubCell"/>
</dbReference>
<dbReference type="GO" id="GO:0000287">
    <property type="term" value="F:magnesium ion binding"/>
    <property type="evidence" value="ECO:0007669"/>
    <property type="project" value="UniProtKB-UniRule"/>
</dbReference>
<dbReference type="GO" id="GO:0004635">
    <property type="term" value="F:phosphoribosyl-AMP cyclohydrolase activity"/>
    <property type="evidence" value="ECO:0007669"/>
    <property type="project" value="UniProtKB-UniRule"/>
</dbReference>
<dbReference type="GO" id="GO:0008270">
    <property type="term" value="F:zinc ion binding"/>
    <property type="evidence" value="ECO:0007669"/>
    <property type="project" value="UniProtKB-UniRule"/>
</dbReference>
<dbReference type="GO" id="GO:0000105">
    <property type="term" value="P:L-histidine biosynthetic process"/>
    <property type="evidence" value="ECO:0007669"/>
    <property type="project" value="UniProtKB-UniRule"/>
</dbReference>
<dbReference type="FunFam" id="3.10.20.810:FF:000001">
    <property type="entry name" value="Histidine biosynthesis bifunctional protein HisIE"/>
    <property type="match status" value="1"/>
</dbReference>
<dbReference type="Gene3D" id="3.10.20.810">
    <property type="entry name" value="Phosphoribosyl-AMP cyclohydrolase"/>
    <property type="match status" value="1"/>
</dbReference>
<dbReference type="HAMAP" id="MF_01021">
    <property type="entry name" value="HisI"/>
    <property type="match status" value="1"/>
</dbReference>
<dbReference type="InterPro" id="IPR026660">
    <property type="entry name" value="PRA-CH"/>
</dbReference>
<dbReference type="InterPro" id="IPR002496">
    <property type="entry name" value="PRib_AMP_CycHydrolase_dom"/>
</dbReference>
<dbReference type="InterPro" id="IPR038019">
    <property type="entry name" value="PRib_AMP_CycHydrolase_sf"/>
</dbReference>
<dbReference type="NCBIfam" id="NF000768">
    <property type="entry name" value="PRK00051.1"/>
    <property type="match status" value="1"/>
</dbReference>
<dbReference type="PANTHER" id="PTHR42945">
    <property type="entry name" value="HISTIDINE BIOSYNTHESIS BIFUNCTIONAL PROTEIN"/>
    <property type="match status" value="1"/>
</dbReference>
<dbReference type="PANTHER" id="PTHR42945:SF1">
    <property type="entry name" value="HISTIDINE BIOSYNTHESIS BIFUNCTIONAL PROTEIN HIS7"/>
    <property type="match status" value="1"/>
</dbReference>
<dbReference type="Pfam" id="PF01502">
    <property type="entry name" value="PRA-CH"/>
    <property type="match status" value="1"/>
</dbReference>
<dbReference type="SUPFAM" id="SSF141734">
    <property type="entry name" value="HisI-like"/>
    <property type="match status" value="1"/>
</dbReference>
<gene>
    <name evidence="1" type="primary">hisI</name>
    <name type="ordered locus">SGO_1403</name>
</gene>
<protein>
    <recommendedName>
        <fullName evidence="1">Phosphoribosyl-AMP cyclohydrolase</fullName>
        <shortName evidence="1">PRA-CH</shortName>
        <ecNumber evidence="1">3.5.4.19</ecNumber>
    </recommendedName>
</protein>
<proteinExistence type="inferred from homology"/>
<accession>A8AY23</accession>
<keyword id="KW-0028">Amino-acid biosynthesis</keyword>
<keyword id="KW-0963">Cytoplasm</keyword>
<keyword id="KW-0368">Histidine biosynthesis</keyword>
<keyword id="KW-0378">Hydrolase</keyword>
<keyword id="KW-0460">Magnesium</keyword>
<keyword id="KW-0479">Metal-binding</keyword>
<keyword id="KW-1185">Reference proteome</keyword>
<keyword id="KW-0862">Zinc</keyword>
<feature type="chain" id="PRO_1000084186" description="Phosphoribosyl-AMP cyclohydrolase">
    <location>
        <begin position="1"/>
        <end position="114"/>
    </location>
</feature>
<feature type="binding site" evidence="1">
    <location>
        <position position="76"/>
    </location>
    <ligand>
        <name>Mg(2+)</name>
        <dbReference type="ChEBI" id="CHEBI:18420"/>
    </ligand>
</feature>
<feature type="binding site" evidence="1">
    <location>
        <position position="77"/>
    </location>
    <ligand>
        <name>Zn(2+)</name>
        <dbReference type="ChEBI" id="CHEBI:29105"/>
        <note>ligand shared between dimeric partners</note>
    </ligand>
</feature>
<feature type="binding site" evidence="1">
    <location>
        <position position="78"/>
    </location>
    <ligand>
        <name>Mg(2+)</name>
        <dbReference type="ChEBI" id="CHEBI:18420"/>
    </ligand>
</feature>
<feature type="binding site" evidence="1">
    <location>
        <position position="80"/>
    </location>
    <ligand>
        <name>Mg(2+)</name>
        <dbReference type="ChEBI" id="CHEBI:18420"/>
    </ligand>
</feature>
<feature type="binding site" evidence="1">
    <location>
        <position position="93"/>
    </location>
    <ligand>
        <name>Zn(2+)</name>
        <dbReference type="ChEBI" id="CHEBI:29105"/>
        <note>ligand shared between dimeric partners</note>
    </ligand>
</feature>
<feature type="binding site" evidence="1">
    <location>
        <position position="100"/>
    </location>
    <ligand>
        <name>Zn(2+)</name>
        <dbReference type="ChEBI" id="CHEBI:29105"/>
        <note>ligand shared between dimeric partners</note>
    </ligand>
</feature>
<reference key="1">
    <citation type="journal article" date="2007" name="J. Bacteriol.">
        <title>Genome-wide transcriptional changes in Streptococcus gordonii in response to competence signaling peptide.</title>
        <authorList>
            <person name="Vickerman M.M."/>
            <person name="Iobst S."/>
            <person name="Jesionowski A.M."/>
            <person name="Gill S.R."/>
        </authorList>
    </citation>
    <scope>NUCLEOTIDE SEQUENCE [LARGE SCALE GENOMIC DNA]</scope>
    <source>
        <strain>Challis / ATCC 35105 / BCRC 15272 / CH1 / DL1 / V288</strain>
    </source>
</reference>